<proteinExistence type="evidence at transcript level"/>
<reference key="1">
    <citation type="journal article" date="1996" name="Endocrinology">
        <title>Developmental expression of a candidate Muellerian inhibiting substance type II receptor.</title>
        <authorList>
            <person name="Teixeira J."/>
            <person name="He W.W."/>
            <person name="Shah P.C."/>
            <person name="Morikawa N."/>
            <person name="Lee M.M."/>
            <person name="Catlin E.A."/>
            <person name="Hudson P.L."/>
            <person name="Wing J."/>
            <person name="Maclaughlin D.T."/>
            <person name="Donahoe P.K."/>
        </authorList>
    </citation>
    <scope>NUCLEOTIDE SEQUENCE [MRNA]</scope>
</reference>
<reference key="2">
    <citation type="journal article" date="1994" name="Development">
        <title>A novel member of the transmembrane serine/threonine kinase receptor family is specifically expressed in the gonads and in mesenchymal cells adjacent to the Muellerian duct.</title>
        <authorList>
            <person name="Baarends W.M."/>
            <person name="Van Helmond M.J.L."/>
            <person name="Post M."/>
            <person name="Van der Schoot P.J.C.M."/>
            <person name="Hoogerbrugge J.W."/>
            <person name="de Winter J.P."/>
            <person name="Uilenbroek J.T.J."/>
            <person name="Karels B."/>
            <person name="Wilming L.G."/>
            <person name="Meijers J.H.C."/>
            <person name="Themmem A.P.N."/>
            <person name="Grootegoed A.J."/>
        </authorList>
    </citation>
    <scope>NUCLEOTIDE SEQUENCE [MRNA]</scope>
    <source>
        <tissue>Testis</tissue>
    </source>
</reference>
<reference key="3">
    <citation type="journal article" date="1999" name="Proc. Natl. Acad. Sci. U.S.A.">
        <title>Transcriptional regulation of the rat Muellerian inhibiting substance type II receptor in rodent Leydig cells.</title>
        <authorList>
            <person name="Teixeira J."/>
            <person name="Kehas D.J."/>
            <person name="Antun R."/>
            <person name="Donahoe P.K."/>
        </authorList>
    </citation>
    <scope>NUCLEOTIDE SEQUENCE [GENOMIC DNA] OF 1-16</scope>
    <source>
        <strain>Sprague-Dawley</strain>
    </source>
</reference>
<gene>
    <name type="primary">Amhr2</name>
</gene>
<organism>
    <name type="scientific">Rattus norvegicus</name>
    <name type="common">Rat</name>
    <dbReference type="NCBI Taxonomy" id="10116"/>
    <lineage>
        <taxon>Eukaryota</taxon>
        <taxon>Metazoa</taxon>
        <taxon>Chordata</taxon>
        <taxon>Craniata</taxon>
        <taxon>Vertebrata</taxon>
        <taxon>Euteleostomi</taxon>
        <taxon>Mammalia</taxon>
        <taxon>Eutheria</taxon>
        <taxon>Euarchontoglires</taxon>
        <taxon>Glires</taxon>
        <taxon>Rodentia</taxon>
        <taxon>Myomorpha</taxon>
        <taxon>Muroidea</taxon>
        <taxon>Muridae</taxon>
        <taxon>Murinae</taxon>
        <taxon>Rattus</taxon>
    </lineage>
</organism>
<keyword id="KW-0067">ATP-binding</keyword>
<keyword id="KW-1015">Disulfide bond</keyword>
<keyword id="KW-0325">Glycoprotein</keyword>
<keyword id="KW-0418">Kinase</keyword>
<keyword id="KW-0460">Magnesium</keyword>
<keyword id="KW-0464">Manganese</keyword>
<keyword id="KW-0472">Membrane</keyword>
<keyword id="KW-0479">Metal-binding</keyword>
<keyword id="KW-0547">Nucleotide-binding</keyword>
<keyword id="KW-0675">Receptor</keyword>
<keyword id="KW-1185">Reference proteome</keyword>
<keyword id="KW-0723">Serine/threonine-protein kinase</keyword>
<keyword id="KW-0732">Signal</keyword>
<keyword id="KW-0808">Transferase</keyword>
<keyword id="KW-0812">Transmembrane</keyword>
<keyword id="KW-1133">Transmembrane helix</keyword>
<comment type="function">
    <text>On ligand binding, forms a receptor complex consisting of two type II and two type I transmembrane serine/threonine kinases. Type II receptors phosphorylate and activate type I receptors which autophosphorylate, then bind and activate SMAD transcriptional regulators. Receptor for anti-Muellerian hormone.</text>
</comment>
<comment type="catalytic activity">
    <reaction>
        <text>L-threonyl-[receptor-protein] + ATP = O-phospho-L-threonyl-[receptor-protein] + ADP + H(+)</text>
        <dbReference type="Rhea" id="RHEA:44880"/>
        <dbReference type="Rhea" id="RHEA-COMP:11024"/>
        <dbReference type="Rhea" id="RHEA-COMP:11025"/>
        <dbReference type="ChEBI" id="CHEBI:15378"/>
        <dbReference type="ChEBI" id="CHEBI:30013"/>
        <dbReference type="ChEBI" id="CHEBI:30616"/>
        <dbReference type="ChEBI" id="CHEBI:61977"/>
        <dbReference type="ChEBI" id="CHEBI:456216"/>
        <dbReference type="EC" id="2.7.11.30"/>
    </reaction>
</comment>
<comment type="catalytic activity">
    <reaction>
        <text>L-seryl-[receptor-protein] + ATP = O-phospho-L-seryl-[receptor-protein] + ADP + H(+)</text>
        <dbReference type="Rhea" id="RHEA:18673"/>
        <dbReference type="Rhea" id="RHEA-COMP:11022"/>
        <dbReference type="Rhea" id="RHEA-COMP:11023"/>
        <dbReference type="ChEBI" id="CHEBI:15378"/>
        <dbReference type="ChEBI" id="CHEBI:29999"/>
        <dbReference type="ChEBI" id="CHEBI:30616"/>
        <dbReference type="ChEBI" id="CHEBI:83421"/>
        <dbReference type="ChEBI" id="CHEBI:456216"/>
        <dbReference type="EC" id="2.7.11.30"/>
    </reaction>
</comment>
<comment type="cofactor">
    <cofactor evidence="1">
        <name>Mg(2+)</name>
        <dbReference type="ChEBI" id="CHEBI:18420"/>
    </cofactor>
    <cofactor evidence="1">
        <name>Mn(2+)</name>
        <dbReference type="ChEBI" id="CHEBI:29035"/>
    </cofactor>
</comment>
<comment type="subunit">
    <text evidence="3">Interacts with type I receptor ACVR1.</text>
</comment>
<comment type="subcellular location">
    <subcellularLocation>
        <location>Membrane</location>
        <topology>Single-pass type I membrane protein</topology>
    </subcellularLocation>
</comment>
<comment type="developmental stage">
    <text>Expressed in the mesenchymal cells surrounding the Muellerian duct at embryonic days 14, 15, and 16 and in tubular and follicular structures of the fetal gonads.</text>
</comment>
<comment type="similarity">
    <text evidence="6">Belongs to the protein kinase superfamily. TKL Ser/Thr protein kinase family. TGFB receptor subfamily.</text>
</comment>
<accession>Q62893</accession>
<accession>Q63045</accession>
<accession>Q9R0A7</accession>
<sequence length="557" mass="59749">MLGTLGLWTLLPAAAQVSPNRRTCVFFEAPGVRGSTKTLGEVVDAGPGPPKGIRCLYSHCCFGIWNLTHGRAQVEMQGCLDSDEPGCESLHCDPVPRAHPSPSSTLFTCSCGTDFCNANYSHLPPSGNRGAPGPQEPQATPGGPIWMAQLLLGVFLVLLLSIIILALLQRKACRVQGGSDPEPEPGSGGDCSEELPELAELRFSQVIQEGGHAVVWAGRLQGEMVAIKAFPPRAVAQFRAERAVYQLLGLQHNHIVRFITAGQGGPGPLPSGPLLVLELYPKGSLCHYLTQYTSDWGSSLRMALSLAEGLAFLHGERWQDGQYKPGIAHRDLSSQNVLIREDRSCAIGDLGLALVLPGLAQPPALAPTQPRGPAAILEAGTQRYMAPELLDKTLDLQDWGTALQRADVYSLALLLWEILSRCSDLRPDHRPPPFQLAYEAELGSNPSACELWALAVAERKRPNIPSSWSCSATDPRGLRELLEDCWDADPEARLTAECVQQRLAALAYPQVASSFPESCPQGCPENCPAAPASAAFPCRPQQSSCLLSVQQGSGSKS</sequence>
<feature type="signal peptide" evidence="4">
    <location>
        <begin position="1"/>
        <end position="17"/>
    </location>
</feature>
<feature type="chain" id="PRO_0000024409" description="Anti-Muellerian hormone type-2 receptor">
    <location>
        <begin position="18"/>
        <end position="557"/>
    </location>
</feature>
<feature type="topological domain" description="Extracellular" evidence="4">
    <location>
        <begin position="18"/>
        <end position="144"/>
    </location>
</feature>
<feature type="transmembrane region" description="Helical" evidence="4">
    <location>
        <begin position="145"/>
        <end position="165"/>
    </location>
</feature>
<feature type="topological domain" description="Cytoplasmic" evidence="4">
    <location>
        <begin position="166"/>
        <end position="557"/>
    </location>
</feature>
<feature type="domain" description="Protein kinase" evidence="5">
    <location>
        <begin position="201"/>
        <end position="511"/>
    </location>
</feature>
<feature type="active site" description="Proton acceptor" evidence="5">
    <location>
        <position position="331"/>
    </location>
</feature>
<feature type="binding site" evidence="5">
    <location>
        <begin position="207"/>
        <end position="215"/>
    </location>
    <ligand>
        <name>ATP</name>
        <dbReference type="ChEBI" id="CHEBI:30616"/>
    </ligand>
</feature>
<feature type="binding site" evidence="5">
    <location>
        <position position="228"/>
    </location>
    <ligand>
        <name>ATP</name>
        <dbReference type="ChEBI" id="CHEBI:30616"/>
    </ligand>
</feature>
<feature type="glycosylation site" description="N-linked (GlcNAc...) asparagine" evidence="4">
    <location>
        <position position="66"/>
    </location>
</feature>
<feature type="glycosylation site" description="N-linked (GlcNAc...) asparagine" evidence="4">
    <location>
        <position position="119"/>
    </location>
</feature>
<feature type="disulfide bond" evidence="2">
    <location>
        <begin position="55"/>
        <end position="79"/>
    </location>
</feature>
<feature type="disulfide bond" evidence="2">
    <location>
        <begin position="92"/>
        <end position="109"/>
    </location>
</feature>
<feature type="sequence conflict" description="In Ref. 2; CAA50731." evidence="6" ref="2">
    <original>C</original>
    <variation>Y</variation>
    <location>
        <position position="527"/>
    </location>
</feature>
<dbReference type="EC" id="2.7.11.30"/>
<dbReference type="EMBL" id="U42427">
    <property type="protein sequence ID" value="AAC52343.1"/>
    <property type="molecule type" value="mRNA"/>
</dbReference>
<dbReference type="EMBL" id="X71916">
    <property type="protein sequence ID" value="CAA50731.1"/>
    <property type="molecule type" value="mRNA"/>
</dbReference>
<dbReference type="EMBL" id="AF092445">
    <property type="protein sequence ID" value="AAC64138.1"/>
    <property type="molecule type" value="Genomic_DNA"/>
</dbReference>
<dbReference type="PIR" id="S41627">
    <property type="entry name" value="S41627"/>
</dbReference>
<dbReference type="RefSeq" id="NP_112260.1">
    <property type="nucleotide sequence ID" value="NM_030998.2"/>
</dbReference>
<dbReference type="RefSeq" id="XP_038934520.1">
    <property type="nucleotide sequence ID" value="XM_039078592.2"/>
</dbReference>
<dbReference type="RefSeq" id="XP_038934521.1">
    <property type="nucleotide sequence ID" value="XM_039078593.2"/>
</dbReference>
<dbReference type="SMR" id="Q62893"/>
<dbReference type="FunCoup" id="Q62893">
    <property type="interactions" value="330"/>
</dbReference>
<dbReference type="STRING" id="10116.ENSRNOP00000020103"/>
<dbReference type="GlyCosmos" id="Q62893">
    <property type="glycosylation" value="2 sites, No reported glycans"/>
</dbReference>
<dbReference type="GlyGen" id="Q62893">
    <property type="glycosylation" value="3 sites"/>
</dbReference>
<dbReference type="PhosphoSitePlus" id="Q62893"/>
<dbReference type="PaxDb" id="10116-ENSRNOP00000020103"/>
<dbReference type="Ensembl" id="ENSRNOT00000020103.6">
    <property type="protein sequence ID" value="ENSRNOP00000020103.4"/>
    <property type="gene ID" value="ENSRNOG00000014850.6"/>
</dbReference>
<dbReference type="GeneID" id="29530"/>
<dbReference type="KEGG" id="rno:29530"/>
<dbReference type="UCSC" id="RGD:70964">
    <property type="organism name" value="rat"/>
</dbReference>
<dbReference type="AGR" id="RGD:70964"/>
<dbReference type="CTD" id="269"/>
<dbReference type="RGD" id="70964">
    <property type="gene designation" value="Amhr2"/>
</dbReference>
<dbReference type="eggNOG" id="KOG3653">
    <property type="taxonomic scope" value="Eukaryota"/>
</dbReference>
<dbReference type="GeneTree" id="ENSGT00940000160885"/>
<dbReference type="InParanoid" id="Q62893"/>
<dbReference type="OMA" id="RCPDLWP"/>
<dbReference type="OrthoDB" id="669224at2759"/>
<dbReference type="PhylomeDB" id="Q62893"/>
<dbReference type="TreeFam" id="TF314724"/>
<dbReference type="BRENDA" id="2.7.10.2">
    <property type="organism ID" value="5301"/>
</dbReference>
<dbReference type="Reactome" id="R-RNO-201451">
    <property type="pathway name" value="Signaling by BMP"/>
</dbReference>
<dbReference type="PRO" id="PR:Q62893"/>
<dbReference type="Proteomes" id="UP000002494">
    <property type="component" value="Chromosome 7"/>
</dbReference>
<dbReference type="Bgee" id="ENSRNOG00000014850">
    <property type="expression patterns" value="Expressed in ovary and 15 other cell types or tissues"/>
</dbReference>
<dbReference type="ExpressionAtlas" id="Q62893">
    <property type="expression patterns" value="baseline and differential"/>
</dbReference>
<dbReference type="GO" id="GO:0005886">
    <property type="term" value="C:plasma membrane"/>
    <property type="evidence" value="ECO:0000314"/>
    <property type="project" value="MGI"/>
</dbReference>
<dbReference type="GO" id="GO:0043235">
    <property type="term" value="C:receptor complex"/>
    <property type="evidence" value="ECO:0000318"/>
    <property type="project" value="GO_Central"/>
</dbReference>
<dbReference type="GO" id="GO:1990272">
    <property type="term" value="F:anti-Mullerian hormone receptor activity"/>
    <property type="evidence" value="ECO:0000250"/>
    <property type="project" value="UniProtKB"/>
</dbReference>
<dbReference type="GO" id="GO:0005524">
    <property type="term" value="F:ATP binding"/>
    <property type="evidence" value="ECO:0007669"/>
    <property type="project" value="UniProtKB-KW"/>
</dbReference>
<dbReference type="GO" id="GO:0042562">
    <property type="term" value="F:hormone binding"/>
    <property type="evidence" value="ECO:0000250"/>
    <property type="project" value="UniProtKB"/>
</dbReference>
<dbReference type="GO" id="GO:0046872">
    <property type="term" value="F:metal ion binding"/>
    <property type="evidence" value="ECO:0007669"/>
    <property type="project" value="UniProtKB-KW"/>
</dbReference>
<dbReference type="GO" id="GO:0042803">
    <property type="term" value="F:protein homodimerization activity"/>
    <property type="evidence" value="ECO:0000266"/>
    <property type="project" value="RGD"/>
</dbReference>
<dbReference type="GO" id="GO:0005024">
    <property type="term" value="F:transforming growth factor beta receptor activity"/>
    <property type="evidence" value="ECO:0000318"/>
    <property type="project" value="GO_Central"/>
</dbReference>
<dbReference type="GO" id="GO:0005026">
    <property type="term" value="F:transforming growth factor beta receptor activity, type II"/>
    <property type="evidence" value="ECO:0000314"/>
    <property type="project" value="MGI"/>
</dbReference>
<dbReference type="GO" id="GO:1990262">
    <property type="term" value="P:anti-Mullerian hormone receptor signaling pathway"/>
    <property type="evidence" value="ECO:0000250"/>
    <property type="project" value="UniProtKB"/>
</dbReference>
<dbReference type="GO" id="GO:0030509">
    <property type="term" value="P:BMP signaling pathway"/>
    <property type="evidence" value="ECO:0000318"/>
    <property type="project" value="GO_Central"/>
</dbReference>
<dbReference type="GO" id="GO:0071363">
    <property type="term" value="P:cellular response to growth factor stimulus"/>
    <property type="evidence" value="ECO:0000318"/>
    <property type="project" value="GO_Central"/>
</dbReference>
<dbReference type="GO" id="GO:0008585">
    <property type="term" value="P:female gonad development"/>
    <property type="evidence" value="ECO:0000270"/>
    <property type="project" value="RGD"/>
</dbReference>
<dbReference type="GO" id="GO:0008584">
    <property type="term" value="P:male gonad development"/>
    <property type="evidence" value="ECO:0000270"/>
    <property type="project" value="RGD"/>
</dbReference>
<dbReference type="GO" id="GO:0007548">
    <property type="term" value="P:sex differentiation"/>
    <property type="evidence" value="ECO:0000250"/>
    <property type="project" value="UniProtKB"/>
</dbReference>
<dbReference type="GO" id="GO:0007179">
    <property type="term" value="P:transforming growth factor beta receptor signaling pathway"/>
    <property type="evidence" value="ECO:0000314"/>
    <property type="project" value="MGI"/>
</dbReference>
<dbReference type="CDD" id="cd23616">
    <property type="entry name" value="TFP_LU_ECD_AMHR2"/>
    <property type="match status" value="1"/>
</dbReference>
<dbReference type="FunFam" id="1.10.510.10:FF:000487">
    <property type="entry name" value="Anti-Muellerian hormone type-2 receptor"/>
    <property type="match status" value="1"/>
</dbReference>
<dbReference type="FunFam" id="3.30.200.20:FF:000349">
    <property type="entry name" value="Anti-Muellerian hormone type-2 receptor"/>
    <property type="match status" value="1"/>
</dbReference>
<dbReference type="Gene3D" id="2.10.60.10">
    <property type="entry name" value="CD59"/>
    <property type="match status" value="1"/>
</dbReference>
<dbReference type="Gene3D" id="3.30.200.20">
    <property type="entry name" value="Phosphorylase Kinase, domain 1"/>
    <property type="match status" value="1"/>
</dbReference>
<dbReference type="Gene3D" id="1.10.510.10">
    <property type="entry name" value="Transferase(Phosphotransferase) domain 1"/>
    <property type="match status" value="1"/>
</dbReference>
<dbReference type="InterPro" id="IPR015771">
    <property type="entry name" value="Anti-muellerian_hrmn_rcpt_II"/>
</dbReference>
<dbReference type="InterPro" id="IPR011009">
    <property type="entry name" value="Kinase-like_dom_sf"/>
</dbReference>
<dbReference type="InterPro" id="IPR000719">
    <property type="entry name" value="Prot_kinase_dom"/>
</dbReference>
<dbReference type="InterPro" id="IPR001245">
    <property type="entry name" value="Ser-Thr/Tyr_kinase_cat_dom"/>
</dbReference>
<dbReference type="InterPro" id="IPR045860">
    <property type="entry name" value="Snake_toxin-like_sf"/>
</dbReference>
<dbReference type="InterPro" id="IPR000333">
    <property type="entry name" value="TGFB_receptor"/>
</dbReference>
<dbReference type="PANTHER" id="PTHR23255:SF49">
    <property type="entry name" value="ANTI-MUELLERIAN HORMONE TYPE-2 RECEPTOR"/>
    <property type="match status" value="1"/>
</dbReference>
<dbReference type="PANTHER" id="PTHR23255">
    <property type="entry name" value="TRANSFORMING GROWTH FACTOR-BETA RECEPTOR TYPE I AND II"/>
    <property type="match status" value="1"/>
</dbReference>
<dbReference type="Pfam" id="PF07714">
    <property type="entry name" value="PK_Tyr_Ser-Thr"/>
    <property type="match status" value="1"/>
</dbReference>
<dbReference type="PIRSF" id="PIRSF037392">
    <property type="entry name" value="AMHRII"/>
    <property type="match status" value="1"/>
</dbReference>
<dbReference type="SUPFAM" id="SSF56112">
    <property type="entry name" value="Protein kinase-like (PK-like)"/>
    <property type="match status" value="1"/>
</dbReference>
<dbReference type="SUPFAM" id="SSF57302">
    <property type="entry name" value="Snake toxin-like"/>
    <property type="match status" value="1"/>
</dbReference>
<dbReference type="PROSITE" id="PS50011">
    <property type="entry name" value="PROTEIN_KINASE_DOM"/>
    <property type="match status" value="1"/>
</dbReference>
<protein>
    <recommendedName>
        <fullName>Anti-Muellerian hormone type-2 receptor</fullName>
        <ecNumber>2.7.11.30</ecNumber>
    </recommendedName>
    <alternativeName>
        <fullName>Anti-Muellerian hormone type II receptor</fullName>
        <shortName>AMH type II receptor</shortName>
    </alternativeName>
    <alternativeName>
        <fullName>C14</fullName>
    </alternativeName>
    <alternativeName>
        <fullName>MIS type II receptor</fullName>
        <shortName>MISRII</shortName>
        <shortName>MRII</shortName>
    </alternativeName>
</protein>
<name>AMHR2_RAT</name>
<evidence type="ECO:0000250" key="1"/>
<evidence type="ECO:0000250" key="2">
    <source>
        <dbReference type="UniProtKB" id="P37023"/>
    </source>
</evidence>
<evidence type="ECO:0000250" key="3">
    <source>
        <dbReference type="UniProtKB" id="Q16671"/>
    </source>
</evidence>
<evidence type="ECO:0000255" key="4"/>
<evidence type="ECO:0000255" key="5">
    <source>
        <dbReference type="PROSITE-ProRule" id="PRU00159"/>
    </source>
</evidence>
<evidence type="ECO:0000305" key="6"/>